<organism>
    <name type="scientific">Burkholderia thailandensis (strain ATCC 700388 / DSM 13276 / CCUG 48851 / CIP 106301 / E264)</name>
    <dbReference type="NCBI Taxonomy" id="271848"/>
    <lineage>
        <taxon>Bacteria</taxon>
        <taxon>Pseudomonadati</taxon>
        <taxon>Pseudomonadota</taxon>
        <taxon>Betaproteobacteria</taxon>
        <taxon>Burkholderiales</taxon>
        <taxon>Burkholderiaceae</taxon>
        <taxon>Burkholderia</taxon>
        <taxon>pseudomallei group</taxon>
    </lineage>
</organism>
<sequence length="285" mass="30946">MFNWVKTAMLMAAITALFIVIGGMIGGSRGMTIALLIALGMNFFSYWFSDKMVLRMYNAQEVDETTAPQFYRMVRELATRANLPMPRVYLIDESQPNAFATGRNPEHAAVAATTGILRVLSEREMRGVMAHELAHVKHRDILISTISATMAGAISALANFAMFFGGRDENGRPANPIAGIAVALLAPIAGALIQMAISRAREFEADRGGAQISGDPQALASALDKIHRYASGIPFQTAEEHPATAQMMIMNPLSGGGLQNLFSTHPATEERIARLMEMARTGRFD</sequence>
<evidence type="ECO:0000255" key="1">
    <source>
        <dbReference type="HAMAP-Rule" id="MF_00188"/>
    </source>
</evidence>
<feature type="chain" id="PRO_1000077460" description="Protease HtpX homolog">
    <location>
        <begin position="1"/>
        <end position="285"/>
    </location>
</feature>
<feature type="transmembrane region" description="Helical" evidence="1">
    <location>
        <begin position="7"/>
        <end position="27"/>
    </location>
</feature>
<feature type="transmembrane region" description="Helical" evidence="1">
    <location>
        <begin position="30"/>
        <end position="50"/>
    </location>
</feature>
<feature type="transmembrane region" description="Helical" evidence="1">
    <location>
        <begin position="146"/>
        <end position="166"/>
    </location>
</feature>
<feature type="transmembrane region" description="Helical" evidence="1">
    <location>
        <begin position="177"/>
        <end position="197"/>
    </location>
</feature>
<feature type="active site" evidence="1">
    <location>
        <position position="132"/>
    </location>
</feature>
<feature type="binding site" evidence="1">
    <location>
        <position position="131"/>
    </location>
    <ligand>
        <name>Zn(2+)</name>
        <dbReference type="ChEBI" id="CHEBI:29105"/>
        <note>catalytic</note>
    </ligand>
</feature>
<feature type="binding site" evidence="1">
    <location>
        <position position="135"/>
    </location>
    <ligand>
        <name>Zn(2+)</name>
        <dbReference type="ChEBI" id="CHEBI:29105"/>
        <note>catalytic</note>
    </ligand>
</feature>
<feature type="binding site" evidence="1">
    <location>
        <position position="202"/>
    </location>
    <ligand>
        <name>Zn(2+)</name>
        <dbReference type="ChEBI" id="CHEBI:29105"/>
        <note>catalytic</note>
    </ligand>
</feature>
<keyword id="KW-0997">Cell inner membrane</keyword>
<keyword id="KW-1003">Cell membrane</keyword>
<keyword id="KW-0378">Hydrolase</keyword>
<keyword id="KW-0472">Membrane</keyword>
<keyword id="KW-0479">Metal-binding</keyword>
<keyword id="KW-0482">Metalloprotease</keyword>
<keyword id="KW-0645">Protease</keyword>
<keyword id="KW-0812">Transmembrane</keyword>
<keyword id="KW-1133">Transmembrane helix</keyword>
<keyword id="KW-0862">Zinc</keyword>
<comment type="cofactor">
    <cofactor evidence="1">
        <name>Zn(2+)</name>
        <dbReference type="ChEBI" id="CHEBI:29105"/>
    </cofactor>
    <text evidence="1">Binds 1 zinc ion per subunit.</text>
</comment>
<comment type="subcellular location">
    <subcellularLocation>
        <location evidence="1">Cell inner membrane</location>
        <topology evidence="1">Multi-pass membrane protein</topology>
    </subcellularLocation>
</comment>
<comment type="similarity">
    <text evidence="1">Belongs to the peptidase M48B family.</text>
</comment>
<accession>Q2T2A9</accession>
<dbReference type="EC" id="3.4.24.-" evidence="1"/>
<dbReference type="EMBL" id="CP000086">
    <property type="protein sequence ID" value="ABC38153.1"/>
    <property type="molecule type" value="Genomic_DNA"/>
</dbReference>
<dbReference type="RefSeq" id="WP_009893638.1">
    <property type="nucleotide sequence ID" value="NZ_CP008785.1"/>
</dbReference>
<dbReference type="GeneID" id="45119903"/>
<dbReference type="KEGG" id="bte:BTH_I0131"/>
<dbReference type="HOGENOM" id="CLU_042266_3_0_4"/>
<dbReference type="Proteomes" id="UP000001930">
    <property type="component" value="Chromosome I"/>
</dbReference>
<dbReference type="GO" id="GO:0005886">
    <property type="term" value="C:plasma membrane"/>
    <property type="evidence" value="ECO:0007669"/>
    <property type="project" value="UniProtKB-SubCell"/>
</dbReference>
<dbReference type="GO" id="GO:0004222">
    <property type="term" value="F:metalloendopeptidase activity"/>
    <property type="evidence" value="ECO:0007669"/>
    <property type="project" value="UniProtKB-UniRule"/>
</dbReference>
<dbReference type="GO" id="GO:0008270">
    <property type="term" value="F:zinc ion binding"/>
    <property type="evidence" value="ECO:0007669"/>
    <property type="project" value="UniProtKB-UniRule"/>
</dbReference>
<dbReference type="GO" id="GO:0006508">
    <property type="term" value="P:proteolysis"/>
    <property type="evidence" value="ECO:0007669"/>
    <property type="project" value="UniProtKB-KW"/>
</dbReference>
<dbReference type="CDD" id="cd07336">
    <property type="entry name" value="M48B_HtpX_like"/>
    <property type="match status" value="1"/>
</dbReference>
<dbReference type="Gene3D" id="3.30.2010.10">
    <property type="entry name" value="Metalloproteases ('zincins'), catalytic domain"/>
    <property type="match status" value="1"/>
</dbReference>
<dbReference type="HAMAP" id="MF_00188">
    <property type="entry name" value="Pept_M48_protease_HtpX"/>
    <property type="match status" value="1"/>
</dbReference>
<dbReference type="InterPro" id="IPR050083">
    <property type="entry name" value="HtpX_protease"/>
</dbReference>
<dbReference type="InterPro" id="IPR022919">
    <property type="entry name" value="Pept_M48_protease_HtpX"/>
</dbReference>
<dbReference type="InterPro" id="IPR001915">
    <property type="entry name" value="Peptidase_M48"/>
</dbReference>
<dbReference type="NCBIfam" id="NF002363">
    <property type="entry name" value="PRK01345.1"/>
    <property type="match status" value="1"/>
</dbReference>
<dbReference type="NCBIfam" id="NF002826">
    <property type="entry name" value="PRK03001.1"/>
    <property type="match status" value="1"/>
</dbReference>
<dbReference type="PANTHER" id="PTHR43221">
    <property type="entry name" value="PROTEASE HTPX"/>
    <property type="match status" value="1"/>
</dbReference>
<dbReference type="PANTHER" id="PTHR43221:SF1">
    <property type="entry name" value="PROTEASE HTPX"/>
    <property type="match status" value="1"/>
</dbReference>
<dbReference type="Pfam" id="PF01435">
    <property type="entry name" value="Peptidase_M48"/>
    <property type="match status" value="1"/>
</dbReference>
<reference key="1">
    <citation type="journal article" date="2005" name="BMC Genomics">
        <title>Bacterial genome adaptation to niches: divergence of the potential virulence genes in three Burkholderia species of different survival strategies.</title>
        <authorList>
            <person name="Kim H.S."/>
            <person name="Schell M.A."/>
            <person name="Yu Y."/>
            <person name="Ulrich R.L."/>
            <person name="Sarria S.H."/>
            <person name="Nierman W.C."/>
            <person name="DeShazer D."/>
        </authorList>
    </citation>
    <scope>NUCLEOTIDE SEQUENCE [LARGE SCALE GENOMIC DNA]</scope>
    <source>
        <strain>ATCC 700388 / DSM 13276 / CCUG 48851 / CIP 106301 / E264</strain>
    </source>
</reference>
<protein>
    <recommendedName>
        <fullName evidence="1">Protease HtpX homolog</fullName>
        <ecNumber evidence="1">3.4.24.-</ecNumber>
    </recommendedName>
</protein>
<name>HTPX_BURTA</name>
<gene>
    <name evidence="1" type="primary">htpX</name>
    <name type="ordered locus">BTH_I0131</name>
</gene>
<proteinExistence type="inferred from homology"/>